<accession>Q2MIH5</accession>
<evidence type="ECO:0000255" key="1">
    <source>
        <dbReference type="HAMAP-Rule" id="MF_01308"/>
    </source>
</evidence>
<evidence type="ECO:0000305" key="2"/>
<keyword id="KW-0050">Antiport</keyword>
<keyword id="KW-0150">Chloroplast</keyword>
<keyword id="KW-0375">Hydrogen ion transport</keyword>
<keyword id="KW-0406">Ion transport</keyword>
<keyword id="KW-0472">Membrane</keyword>
<keyword id="KW-0934">Plastid</keyword>
<keyword id="KW-1001">Plastid inner membrane</keyword>
<keyword id="KW-0630">Potassium</keyword>
<keyword id="KW-0633">Potassium transport</keyword>
<keyword id="KW-0812">Transmembrane</keyword>
<keyword id="KW-1133">Transmembrane helix</keyword>
<keyword id="KW-0813">Transport</keyword>
<reference key="1">
    <citation type="journal article" date="2006" name="Theor. Appl. Genet.">
        <title>Complete chloroplast genome sequences of Solanum bulbocastanum, Solanum lycopersicum and comparative analyses with other Solanaceae genomes.</title>
        <authorList>
            <person name="Daniell H."/>
            <person name="Lee S.-B."/>
            <person name="Grevich J."/>
            <person name="Saski C."/>
            <person name="Quesada-Vargas T."/>
            <person name="Guda C."/>
            <person name="Tomkins J."/>
            <person name="Jansen R.K."/>
        </authorList>
    </citation>
    <scope>NUCLEOTIDE SEQUENCE [LARGE SCALE GENOMIC DNA]</scope>
    <source>
        <strain>cv. PT29</strain>
    </source>
</reference>
<proteinExistence type="inferred from homology"/>
<comment type="function">
    <text evidence="1">Contributes to K(+)/H(+) antiport activity by supporting proton efflux to control proton extrusion and homeostasis in chloroplasts in a light-dependent manner to modulate photosynthesis. Prevents excessive induction of non-photochemical quenching (NPQ) under continuous-light conditions. Indirectly promotes efficient inorganic carbon uptake into chloroplasts.</text>
</comment>
<comment type="catalytic activity">
    <reaction evidence="1">
        <text>K(+)(in) + H(+)(out) = K(+)(out) + H(+)(in)</text>
        <dbReference type="Rhea" id="RHEA:29467"/>
        <dbReference type="ChEBI" id="CHEBI:15378"/>
        <dbReference type="ChEBI" id="CHEBI:29103"/>
    </reaction>
</comment>
<comment type="subcellular location">
    <subcellularLocation>
        <location evidence="1">Plastid</location>
        <location evidence="1">Chloroplast inner membrane</location>
        <topology evidence="1">Multi-pass membrane protein</topology>
    </subcellularLocation>
</comment>
<comment type="similarity">
    <text evidence="1 2">Belongs to the CemA family.</text>
</comment>
<organism>
    <name type="scientific">Solanum bulbocastanum</name>
    <name type="common">Wild potato</name>
    <dbReference type="NCBI Taxonomy" id="147425"/>
    <lineage>
        <taxon>Eukaryota</taxon>
        <taxon>Viridiplantae</taxon>
        <taxon>Streptophyta</taxon>
        <taxon>Embryophyta</taxon>
        <taxon>Tracheophyta</taxon>
        <taxon>Spermatophyta</taxon>
        <taxon>Magnoliopsida</taxon>
        <taxon>eudicotyledons</taxon>
        <taxon>Gunneridae</taxon>
        <taxon>Pentapetalae</taxon>
        <taxon>asterids</taxon>
        <taxon>lamiids</taxon>
        <taxon>Solanales</taxon>
        <taxon>Solanaceae</taxon>
        <taxon>Solanoideae</taxon>
        <taxon>Solaneae</taxon>
        <taxon>Solanum</taxon>
    </lineage>
</organism>
<geneLocation type="chloroplast"/>
<sequence length="229" mass="26748">MAKKKAFTPLFYLASIVFLPWWISFSVNKCLESWVTNWWNTGQSQIVLNNIQEKSLLEKFRELEELLFLDEMIKEYSETHLEEFGIGIHKETIQLITIQNENRMDTILHFSTNIIWFGILSGYSILGKEKLVILNSWAQEFLYNLSDTAKALCLLLVTEFFLGYHSPPGWEFAIRSIYNEVGVVANEQTITILVCILPVIFDTCFKYWLFRYLTSLSPSILLIYDSITE</sequence>
<protein>
    <recommendedName>
        <fullName evidence="1">Potassium/proton antiporter CemA</fullName>
    </recommendedName>
    <alternativeName>
        <fullName evidence="1">Chloroplast envelope membrane protein A</fullName>
        <shortName evidence="1">CemA</shortName>
    </alternativeName>
</protein>
<feature type="chain" id="PRO_0000293533" description="Potassium/proton antiporter CemA">
    <location>
        <begin position="1"/>
        <end position="229"/>
    </location>
</feature>
<feature type="transmembrane region" description="Helical" evidence="1">
    <location>
        <begin position="7"/>
        <end position="27"/>
    </location>
</feature>
<feature type="transmembrane region" description="Helical" evidence="1">
    <location>
        <begin position="107"/>
        <end position="127"/>
    </location>
</feature>
<gene>
    <name evidence="1" type="primary">cemA</name>
</gene>
<name>CEMA_SOLBU</name>
<dbReference type="EMBL" id="DQ347958">
    <property type="protein sequence ID" value="ABC56225.1"/>
    <property type="molecule type" value="Genomic_DNA"/>
</dbReference>
<dbReference type="RefSeq" id="YP_538860.1">
    <property type="nucleotide sequence ID" value="NC_007943.1"/>
</dbReference>
<dbReference type="GeneID" id="3989436"/>
<dbReference type="GO" id="GO:0009706">
    <property type="term" value="C:chloroplast inner membrane"/>
    <property type="evidence" value="ECO:0007669"/>
    <property type="project" value="UniProtKB-SubCell"/>
</dbReference>
<dbReference type="GO" id="GO:0015297">
    <property type="term" value="F:antiporter activity"/>
    <property type="evidence" value="ECO:0007669"/>
    <property type="project" value="UniProtKB-KW"/>
</dbReference>
<dbReference type="GO" id="GO:0015078">
    <property type="term" value="F:proton transmembrane transporter activity"/>
    <property type="evidence" value="ECO:0007669"/>
    <property type="project" value="UniProtKB-UniRule"/>
</dbReference>
<dbReference type="GO" id="GO:0006813">
    <property type="term" value="P:potassium ion transport"/>
    <property type="evidence" value="ECO:0007669"/>
    <property type="project" value="UniProtKB-UniRule"/>
</dbReference>
<dbReference type="HAMAP" id="MF_01308">
    <property type="entry name" value="CemA_PxcA"/>
    <property type="match status" value="1"/>
</dbReference>
<dbReference type="InterPro" id="IPR004282">
    <property type="entry name" value="CemA"/>
</dbReference>
<dbReference type="PANTHER" id="PTHR33650:SF2">
    <property type="entry name" value="CHLOROPLAST ENVELOPE MEMBRANE PROTEIN"/>
    <property type="match status" value="1"/>
</dbReference>
<dbReference type="PANTHER" id="PTHR33650">
    <property type="entry name" value="CHLOROPLAST ENVELOPE MEMBRANE PROTEIN-RELATED"/>
    <property type="match status" value="1"/>
</dbReference>
<dbReference type="Pfam" id="PF03040">
    <property type="entry name" value="CemA"/>
    <property type="match status" value="1"/>
</dbReference>